<name>RNY2_LEVBA</name>
<feature type="chain" id="PRO_0000344890" description="Ribonuclease Y 2">
    <location>
        <begin position="1"/>
        <end position="535"/>
    </location>
</feature>
<feature type="transmembrane region" description="Helical" evidence="1">
    <location>
        <begin position="1"/>
        <end position="21"/>
    </location>
</feature>
<feature type="domain" description="KH" evidence="1">
    <location>
        <begin position="207"/>
        <end position="268"/>
    </location>
</feature>
<feature type="domain" description="HD" evidence="2">
    <location>
        <begin position="334"/>
        <end position="427"/>
    </location>
</feature>
<reference key="1">
    <citation type="journal article" date="2006" name="Proc. Natl. Acad. Sci. U.S.A.">
        <title>Comparative genomics of the lactic acid bacteria.</title>
        <authorList>
            <person name="Makarova K.S."/>
            <person name="Slesarev A."/>
            <person name="Wolf Y.I."/>
            <person name="Sorokin A."/>
            <person name="Mirkin B."/>
            <person name="Koonin E.V."/>
            <person name="Pavlov A."/>
            <person name="Pavlova N."/>
            <person name="Karamychev V."/>
            <person name="Polouchine N."/>
            <person name="Shakhova V."/>
            <person name="Grigoriev I."/>
            <person name="Lou Y."/>
            <person name="Rohksar D."/>
            <person name="Lucas S."/>
            <person name="Huang K."/>
            <person name="Goodstein D.M."/>
            <person name="Hawkins T."/>
            <person name="Plengvidhya V."/>
            <person name="Welker D."/>
            <person name="Hughes J."/>
            <person name="Goh Y."/>
            <person name="Benson A."/>
            <person name="Baldwin K."/>
            <person name="Lee J.-H."/>
            <person name="Diaz-Muniz I."/>
            <person name="Dosti B."/>
            <person name="Smeianov V."/>
            <person name="Wechter W."/>
            <person name="Barabote R."/>
            <person name="Lorca G."/>
            <person name="Altermann E."/>
            <person name="Barrangou R."/>
            <person name="Ganesan B."/>
            <person name="Xie Y."/>
            <person name="Rawsthorne H."/>
            <person name="Tamir D."/>
            <person name="Parker C."/>
            <person name="Breidt F."/>
            <person name="Broadbent J.R."/>
            <person name="Hutkins R."/>
            <person name="O'Sullivan D."/>
            <person name="Steele J."/>
            <person name="Unlu G."/>
            <person name="Saier M.H. Jr."/>
            <person name="Klaenhammer T."/>
            <person name="Richardson P."/>
            <person name="Kozyavkin S."/>
            <person name="Weimer B.C."/>
            <person name="Mills D.A."/>
        </authorList>
    </citation>
    <scope>NUCLEOTIDE SEQUENCE [LARGE SCALE GENOMIC DNA]</scope>
    <source>
        <strain>ATCC 367 / BCRC 12310 / CIP 105137 / JCM 1170 / LMG 11437 / NCIMB 947 / NCTC 947</strain>
    </source>
</reference>
<accession>Q03NQ6</accession>
<proteinExistence type="inferred from homology"/>
<protein>
    <recommendedName>
        <fullName evidence="1">Ribonuclease Y 2</fullName>
        <shortName evidence="1">RNase Y 2</shortName>
        <ecNumber evidence="1">3.1.-.-</ecNumber>
    </recommendedName>
</protein>
<keyword id="KW-1003">Cell membrane</keyword>
<keyword id="KW-0255">Endonuclease</keyword>
<keyword id="KW-0378">Hydrolase</keyword>
<keyword id="KW-0472">Membrane</keyword>
<keyword id="KW-0540">Nuclease</keyword>
<keyword id="KW-1185">Reference proteome</keyword>
<keyword id="KW-0694">RNA-binding</keyword>
<keyword id="KW-0812">Transmembrane</keyword>
<keyword id="KW-1133">Transmembrane helix</keyword>
<comment type="function">
    <text evidence="1">Endoribonuclease that initiates mRNA decay.</text>
</comment>
<comment type="subcellular location">
    <subcellularLocation>
        <location evidence="1">Cell membrane</location>
        <topology evidence="1">Single-pass membrane protein</topology>
    </subcellularLocation>
</comment>
<comment type="similarity">
    <text evidence="1">Belongs to the RNase Y family.</text>
</comment>
<organism>
    <name type="scientific">Levilactobacillus brevis (strain ATCC 367 / BCRC 12310 / CIP 105137 / JCM 1170 / LMG 11437 / NCIMB 947 / NCTC 947)</name>
    <name type="common">Lactobacillus brevis</name>
    <dbReference type="NCBI Taxonomy" id="387344"/>
    <lineage>
        <taxon>Bacteria</taxon>
        <taxon>Bacillati</taxon>
        <taxon>Bacillota</taxon>
        <taxon>Bacilli</taxon>
        <taxon>Lactobacillales</taxon>
        <taxon>Lactobacillaceae</taxon>
        <taxon>Levilactobacillus</taxon>
    </lineage>
</organism>
<dbReference type="EC" id="3.1.-.-" evidence="1"/>
<dbReference type="EMBL" id="CP000416">
    <property type="protein sequence ID" value="ABJ65166.1"/>
    <property type="molecule type" value="Genomic_DNA"/>
</dbReference>
<dbReference type="SMR" id="Q03NQ6"/>
<dbReference type="STRING" id="387344.LVIS_2112"/>
<dbReference type="KEGG" id="lbr:LVIS_2112"/>
<dbReference type="eggNOG" id="COG1418">
    <property type="taxonomic scope" value="Bacteria"/>
</dbReference>
<dbReference type="HOGENOM" id="CLU_028328_1_0_9"/>
<dbReference type="Proteomes" id="UP000001652">
    <property type="component" value="Chromosome"/>
</dbReference>
<dbReference type="GO" id="GO:0005886">
    <property type="term" value="C:plasma membrane"/>
    <property type="evidence" value="ECO:0007669"/>
    <property type="project" value="UniProtKB-SubCell"/>
</dbReference>
<dbReference type="GO" id="GO:0003723">
    <property type="term" value="F:RNA binding"/>
    <property type="evidence" value="ECO:0007669"/>
    <property type="project" value="UniProtKB-UniRule"/>
</dbReference>
<dbReference type="GO" id="GO:0004521">
    <property type="term" value="F:RNA endonuclease activity"/>
    <property type="evidence" value="ECO:0007669"/>
    <property type="project" value="UniProtKB-UniRule"/>
</dbReference>
<dbReference type="GO" id="GO:0006402">
    <property type="term" value="P:mRNA catabolic process"/>
    <property type="evidence" value="ECO:0007669"/>
    <property type="project" value="UniProtKB-UniRule"/>
</dbReference>
<dbReference type="CDD" id="cd00077">
    <property type="entry name" value="HDc"/>
    <property type="match status" value="1"/>
</dbReference>
<dbReference type="CDD" id="cd22431">
    <property type="entry name" value="KH-I_RNaseY"/>
    <property type="match status" value="1"/>
</dbReference>
<dbReference type="Gene3D" id="1.10.3210.10">
    <property type="entry name" value="Hypothetical protein af1432"/>
    <property type="match status" value="1"/>
</dbReference>
<dbReference type="HAMAP" id="MF_00335">
    <property type="entry name" value="RNase_Y"/>
    <property type="match status" value="1"/>
</dbReference>
<dbReference type="InterPro" id="IPR051094">
    <property type="entry name" value="Diverse_Catalytic_Enzymes"/>
</dbReference>
<dbReference type="InterPro" id="IPR003607">
    <property type="entry name" value="HD/PDEase_dom"/>
</dbReference>
<dbReference type="InterPro" id="IPR006674">
    <property type="entry name" value="HD_domain"/>
</dbReference>
<dbReference type="InterPro" id="IPR006675">
    <property type="entry name" value="HDIG_dom"/>
</dbReference>
<dbReference type="InterPro" id="IPR004087">
    <property type="entry name" value="KH_dom"/>
</dbReference>
<dbReference type="InterPro" id="IPR004088">
    <property type="entry name" value="KH_dom_type_1"/>
</dbReference>
<dbReference type="InterPro" id="IPR036612">
    <property type="entry name" value="KH_dom_type_1_sf"/>
</dbReference>
<dbReference type="InterPro" id="IPR017705">
    <property type="entry name" value="Ribonuclease_Y"/>
</dbReference>
<dbReference type="InterPro" id="IPR022711">
    <property type="entry name" value="RNase_Y_N"/>
</dbReference>
<dbReference type="NCBIfam" id="TIGR00277">
    <property type="entry name" value="HDIG"/>
    <property type="match status" value="1"/>
</dbReference>
<dbReference type="NCBIfam" id="TIGR03319">
    <property type="entry name" value="RNase_Y"/>
    <property type="match status" value="1"/>
</dbReference>
<dbReference type="PANTHER" id="PTHR35795:SF1">
    <property type="entry name" value="BIS(5'-NUCLEOSYL)-TETRAPHOSPHATASE, SYMMETRICAL"/>
    <property type="match status" value="1"/>
</dbReference>
<dbReference type="PANTHER" id="PTHR35795">
    <property type="entry name" value="SLR1885 PROTEIN"/>
    <property type="match status" value="1"/>
</dbReference>
<dbReference type="Pfam" id="PF01966">
    <property type="entry name" value="HD"/>
    <property type="match status" value="1"/>
</dbReference>
<dbReference type="Pfam" id="PF00013">
    <property type="entry name" value="KH_1"/>
    <property type="match status" value="1"/>
</dbReference>
<dbReference type="Pfam" id="PF12072">
    <property type="entry name" value="RNase_Y_N"/>
    <property type="match status" value="1"/>
</dbReference>
<dbReference type="SMART" id="SM00471">
    <property type="entry name" value="HDc"/>
    <property type="match status" value="1"/>
</dbReference>
<dbReference type="SMART" id="SM00322">
    <property type="entry name" value="KH"/>
    <property type="match status" value="1"/>
</dbReference>
<dbReference type="SUPFAM" id="SSF54791">
    <property type="entry name" value="Eukaryotic type KH-domain (KH-domain type I)"/>
    <property type="match status" value="1"/>
</dbReference>
<dbReference type="SUPFAM" id="SSF109604">
    <property type="entry name" value="HD-domain/PDEase-like"/>
    <property type="match status" value="1"/>
</dbReference>
<dbReference type="PROSITE" id="PS51831">
    <property type="entry name" value="HD"/>
    <property type="match status" value="1"/>
</dbReference>
<sequence>MLITGLIIGCLLIGLVIGYVVRQHQHRQELLAVQKQARDIIASATAETQQKIAKLTADSRRETLTYQQSVKDELAEQTSDIAVREQRRQQREQLLGQMGVRLADQTAILDERSQANRDQRQKIRDLKAQALQLRTDRDEMLAQQAGIDEQAAKDHVLADTELDLKRDRDVEIKALNDNAVANAERWAKDVVLSATESGPQDLPKEHLEHTVTVPNGEIRSKIIGRDGQHIRLLETLTGTDLIFVPDDNTTLFISTHDPIRREVARVALTNLVASRRISSNQIETQVENAQRDVNHSLWETGEQTVSGLHVGWMHPDLMKLIGRLKYRTSYGQNVLLHSIEVAQLTGAMAARLGYNTRLARRAGLLHDLGKAIDHEVEGTHVEIGTEFAQKYGEDDVVINAIAAHHGDVEKTSPLAELVAAADAISGARPGARSESVEDYINRLRALEKIANDQSGVAESYAIQAGRELRIIVKPQELDDTAAANLTQEVAQQIESTLTYPGKIKVTTIRKSTAVEYVGDEKKKKSKKKKKKAANA</sequence>
<evidence type="ECO:0000255" key="1">
    <source>
        <dbReference type="HAMAP-Rule" id="MF_00335"/>
    </source>
</evidence>
<evidence type="ECO:0000255" key="2">
    <source>
        <dbReference type="PROSITE-ProRule" id="PRU01175"/>
    </source>
</evidence>
<gene>
    <name evidence="1" type="primary">rny2</name>
    <name type="ordered locus">LVIS_2112</name>
</gene>